<accession>A8ZXW6</accession>
<proteinExistence type="inferred from homology"/>
<comment type="function">
    <text evidence="1">Catalyzes the initial step of the lipid cycle reactions in the biosynthesis of the cell wall peptidoglycan: transfers peptidoglycan precursor phospho-MurNAc-pentapeptide from UDP-MurNAc-pentapeptide onto the lipid carrier undecaprenyl phosphate, yielding undecaprenyl-pyrophosphoryl-MurNAc-pentapeptide, known as lipid I.</text>
</comment>
<comment type="catalytic activity">
    <reaction evidence="1">
        <text>UDP-N-acetyl-alpha-D-muramoyl-L-alanyl-gamma-D-glutamyl-meso-2,6-diaminopimeloyl-D-alanyl-D-alanine + di-trans,octa-cis-undecaprenyl phosphate = di-trans,octa-cis-undecaprenyl diphospho-N-acetyl-alpha-D-muramoyl-L-alanyl-D-glutamyl-meso-2,6-diaminopimeloyl-D-alanyl-D-alanine + UMP</text>
        <dbReference type="Rhea" id="RHEA:28386"/>
        <dbReference type="ChEBI" id="CHEBI:57865"/>
        <dbReference type="ChEBI" id="CHEBI:60392"/>
        <dbReference type="ChEBI" id="CHEBI:61386"/>
        <dbReference type="ChEBI" id="CHEBI:61387"/>
        <dbReference type="EC" id="2.7.8.13"/>
    </reaction>
</comment>
<comment type="cofactor">
    <cofactor evidence="1">
        <name>Mg(2+)</name>
        <dbReference type="ChEBI" id="CHEBI:18420"/>
    </cofactor>
</comment>
<comment type="pathway">
    <text evidence="1">Cell wall biogenesis; peptidoglycan biosynthesis.</text>
</comment>
<comment type="subcellular location">
    <subcellularLocation>
        <location evidence="1">Cell inner membrane</location>
        <topology evidence="1">Multi-pass membrane protein</topology>
    </subcellularLocation>
</comment>
<comment type="similarity">
    <text evidence="1">Belongs to the glycosyltransferase 4 family. MraY subfamily.</text>
</comment>
<dbReference type="EC" id="2.7.8.13" evidence="1"/>
<dbReference type="EMBL" id="CP000859">
    <property type="protein sequence ID" value="ABW68593.1"/>
    <property type="molecule type" value="Genomic_DNA"/>
</dbReference>
<dbReference type="RefSeq" id="WP_012176204.1">
    <property type="nucleotide sequence ID" value="NC_009943.1"/>
</dbReference>
<dbReference type="SMR" id="A8ZXW6"/>
<dbReference type="STRING" id="96561.Dole_2790"/>
<dbReference type="KEGG" id="dol:Dole_2790"/>
<dbReference type="eggNOG" id="COG0472">
    <property type="taxonomic scope" value="Bacteria"/>
</dbReference>
<dbReference type="HOGENOM" id="CLU_023982_0_0_7"/>
<dbReference type="OrthoDB" id="9805475at2"/>
<dbReference type="UniPathway" id="UPA00219"/>
<dbReference type="Proteomes" id="UP000008561">
    <property type="component" value="Chromosome"/>
</dbReference>
<dbReference type="GO" id="GO:0005886">
    <property type="term" value="C:plasma membrane"/>
    <property type="evidence" value="ECO:0007669"/>
    <property type="project" value="UniProtKB-SubCell"/>
</dbReference>
<dbReference type="GO" id="GO:0046872">
    <property type="term" value="F:metal ion binding"/>
    <property type="evidence" value="ECO:0007669"/>
    <property type="project" value="UniProtKB-KW"/>
</dbReference>
<dbReference type="GO" id="GO:0008963">
    <property type="term" value="F:phospho-N-acetylmuramoyl-pentapeptide-transferase activity"/>
    <property type="evidence" value="ECO:0007669"/>
    <property type="project" value="UniProtKB-UniRule"/>
</dbReference>
<dbReference type="GO" id="GO:0051992">
    <property type="term" value="F:UDP-N-acetylmuramoyl-L-alanyl-D-glutamyl-meso-2,6-diaminopimelyl-D-alanyl-D-alanine:undecaprenyl-phosphate transferase activity"/>
    <property type="evidence" value="ECO:0007669"/>
    <property type="project" value="RHEA"/>
</dbReference>
<dbReference type="GO" id="GO:0051301">
    <property type="term" value="P:cell division"/>
    <property type="evidence" value="ECO:0007669"/>
    <property type="project" value="UniProtKB-KW"/>
</dbReference>
<dbReference type="GO" id="GO:0071555">
    <property type="term" value="P:cell wall organization"/>
    <property type="evidence" value="ECO:0007669"/>
    <property type="project" value="UniProtKB-KW"/>
</dbReference>
<dbReference type="GO" id="GO:0009252">
    <property type="term" value="P:peptidoglycan biosynthetic process"/>
    <property type="evidence" value="ECO:0007669"/>
    <property type="project" value="UniProtKB-UniRule"/>
</dbReference>
<dbReference type="GO" id="GO:0008360">
    <property type="term" value="P:regulation of cell shape"/>
    <property type="evidence" value="ECO:0007669"/>
    <property type="project" value="UniProtKB-KW"/>
</dbReference>
<dbReference type="CDD" id="cd06852">
    <property type="entry name" value="GT_MraY"/>
    <property type="match status" value="1"/>
</dbReference>
<dbReference type="HAMAP" id="MF_00038">
    <property type="entry name" value="MraY"/>
    <property type="match status" value="1"/>
</dbReference>
<dbReference type="InterPro" id="IPR000715">
    <property type="entry name" value="Glycosyl_transferase_4"/>
</dbReference>
<dbReference type="InterPro" id="IPR003524">
    <property type="entry name" value="PNAcMuramoyl-5peptid_Trfase"/>
</dbReference>
<dbReference type="InterPro" id="IPR018480">
    <property type="entry name" value="PNAcMuramoyl-5peptid_Trfase_CS"/>
</dbReference>
<dbReference type="NCBIfam" id="TIGR00445">
    <property type="entry name" value="mraY"/>
    <property type="match status" value="1"/>
</dbReference>
<dbReference type="PANTHER" id="PTHR22926">
    <property type="entry name" value="PHOSPHO-N-ACETYLMURAMOYL-PENTAPEPTIDE-TRANSFERASE"/>
    <property type="match status" value="1"/>
</dbReference>
<dbReference type="PANTHER" id="PTHR22926:SF5">
    <property type="entry name" value="PHOSPHO-N-ACETYLMURAMOYL-PENTAPEPTIDE-TRANSFERASE HOMOLOG"/>
    <property type="match status" value="1"/>
</dbReference>
<dbReference type="Pfam" id="PF00953">
    <property type="entry name" value="Glycos_transf_4"/>
    <property type="match status" value="1"/>
</dbReference>
<dbReference type="Pfam" id="PF10555">
    <property type="entry name" value="MraY_sig1"/>
    <property type="match status" value="1"/>
</dbReference>
<dbReference type="PROSITE" id="PS01347">
    <property type="entry name" value="MRAY_1"/>
    <property type="match status" value="1"/>
</dbReference>
<dbReference type="PROSITE" id="PS01348">
    <property type="entry name" value="MRAY_2"/>
    <property type="match status" value="1"/>
</dbReference>
<organism>
    <name type="scientific">Desulfosudis oleivorans (strain DSM 6200 / JCM 39069 / Hxd3)</name>
    <name type="common">Desulfococcus oleovorans</name>
    <dbReference type="NCBI Taxonomy" id="96561"/>
    <lineage>
        <taxon>Bacteria</taxon>
        <taxon>Pseudomonadati</taxon>
        <taxon>Thermodesulfobacteriota</taxon>
        <taxon>Desulfobacteria</taxon>
        <taxon>Desulfobacterales</taxon>
        <taxon>Desulfosudaceae</taxon>
        <taxon>Desulfosudis</taxon>
    </lineage>
</organism>
<feature type="chain" id="PRO_1000090620" description="Phospho-N-acetylmuramoyl-pentapeptide-transferase">
    <location>
        <begin position="1"/>
        <end position="359"/>
    </location>
</feature>
<feature type="transmembrane region" description="Helical" evidence="1">
    <location>
        <begin position="21"/>
        <end position="41"/>
    </location>
</feature>
<feature type="transmembrane region" description="Helical" evidence="1">
    <location>
        <begin position="73"/>
        <end position="93"/>
    </location>
</feature>
<feature type="transmembrane region" description="Helical" evidence="1">
    <location>
        <begin position="98"/>
        <end position="118"/>
    </location>
</feature>
<feature type="transmembrane region" description="Helical" evidence="1">
    <location>
        <begin position="143"/>
        <end position="163"/>
    </location>
</feature>
<feature type="transmembrane region" description="Helical" evidence="1">
    <location>
        <begin position="166"/>
        <end position="186"/>
    </location>
</feature>
<feature type="transmembrane region" description="Helical" evidence="1">
    <location>
        <begin position="202"/>
        <end position="222"/>
    </location>
</feature>
<feature type="transmembrane region" description="Helical" evidence="1">
    <location>
        <begin position="237"/>
        <end position="257"/>
    </location>
</feature>
<feature type="transmembrane region" description="Helical" evidence="1">
    <location>
        <begin position="261"/>
        <end position="281"/>
    </location>
</feature>
<feature type="transmembrane region" description="Helical" evidence="1">
    <location>
        <begin position="286"/>
        <end position="306"/>
    </location>
</feature>
<feature type="transmembrane region" description="Helical" evidence="1">
    <location>
        <begin position="336"/>
        <end position="356"/>
    </location>
</feature>
<sequence>MLYHLLYPLHTHISFFNVFQYITFRTIYASLTAFLICFLLGPFTIRTLARMQIGQYIRELGPQSHQGKAGTPTMGGLLIVFSVLVACLLWADLTNRYIWVTLAALAGFTTIGFIDDYLMQIKKRNKGLSARAKFLAQTVLAAGICLLIFAASDTNTVLLVPFFKRVAPDLGLFYIVLGVFVIVGTSNAVNLTDGLDGLVTGPLVISFVAYMVFAYVAGNAIISNYLQVIHVPGSGEVTVFCGAMAGGLMGFLWFNAYPAQIFMGDVGSLSLGGALGTVAIITKQEILLTLVGGLFVVETLSVIFQVGFFKATKGRRIFRMAPLHHHFELKGWAEPKIIVRFWIIAIALALIAVSTLKIR</sequence>
<gene>
    <name evidence="1" type="primary">mraY</name>
    <name type="ordered locus">Dole_2790</name>
</gene>
<reference key="1">
    <citation type="submission" date="2007-10" db="EMBL/GenBank/DDBJ databases">
        <title>Complete sequence of Desulfococcus oleovorans Hxd3.</title>
        <authorList>
            <consortium name="US DOE Joint Genome Institute"/>
            <person name="Copeland A."/>
            <person name="Lucas S."/>
            <person name="Lapidus A."/>
            <person name="Barry K."/>
            <person name="Glavina del Rio T."/>
            <person name="Dalin E."/>
            <person name="Tice H."/>
            <person name="Pitluck S."/>
            <person name="Kiss H."/>
            <person name="Brettin T."/>
            <person name="Bruce D."/>
            <person name="Detter J.C."/>
            <person name="Han C."/>
            <person name="Schmutz J."/>
            <person name="Larimer F."/>
            <person name="Land M."/>
            <person name="Hauser L."/>
            <person name="Kyrpides N."/>
            <person name="Kim E."/>
            <person name="Wawrik B."/>
            <person name="Richardson P."/>
        </authorList>
    </citation>
    <scope>NUCLEOTIDE SEQUENCE [LARGE SCALE GENOMIC DNA]</scope>
    <source>
        <strain>DSM 6200 / JCM 39069 / Hxd3</strain>
    </source>
</reference>
<keyword id="KW-0131">Cell cycle</keyword>
<keyword id="KW-0132">Cell division</keyword>
<keyword id="KW-0997">Cell inner membrane</keyword>
<keyword id="KW-1003">Cell membrane</keyword>
<keyword id="KW-0133">Cell shape</keyword>
<keyword id="KW-0961">Cell wall biogenesis/degradation</keyword>
<keyword id="KW-0460">Magnesium</keyword>
<keyword id="KW-0472">Membrane</keyword>
<keyword id="KW-0479">Metal-binding</keyword>
<keyword id="KW-0573">Peptidoglycan synthesis</keyword>
<keyword id="KW-1185">Reference proteome</keyword>
<keyword id="KW-0808">Transferase</keyword>
<keyword id="KW-0812">Transmembrane</keyword>
<keyword id="KW-1133">Transmembrane helix</keyword>
<name>MRAY_DESOH</name>
<protein>
    <recommendedName>
        <fullName evidence="1">Phospho-N-acetylmuramoyl-pentapeptide-transferase</fullName>
        <ecNumber evidence="1">2.7.8.13</ecNumber>
    </recommendedName>
    <alternativeName>
        <fullName evidence="1">UDP-MurNAc-pentapeptide phosphotransferase</fullName>
    </alternativeName>
</protein>
<evidence type="ECO:0000255" key="1">
    <source>
        <dbReference type="HAMAP-Rule" id="MF_00038"/>
    </source>
</evidence>